<name>APOC2_COLGU</name>
<feature type="signal peptide" evidence="2">
    <location>
        <begin position="1"/>
        <end position="22"/>
    </location>
</feature>
<feature type="chain" id="PRO_0000420897" description="Proapolipoprotein C-II">
    <location>
        <begin position="23"/>
        <end position="101"/>
    </location>
</feature>
<feature type="chain" id="PRO_0000430838" description="Apolipoprotein C-II" evidence="1">
    <location>
        <begin position="29"/>
        <end position="101"/>
    </location>
</feature>
<feature type="region of interest" description="Lipid binding" evidence="1">
    <location>
        <begin position="66"/>
        <end position="74"/>
    </location>
</feature>
<feature type="region of interest" description="Lipoprotein lipase cofactor" evidence="1">
    <location>
        <begin position="78"/>
        <end position="101"/>
    </location>
</feature>
<dbReference type="EMBL" id="AC148222">
    <property type="status" value="NOT_ANNOTATED_CDS"/>
    <property type="molecule type" value="Genomic_DNA"/>
</dbReference>
<dbReference type="SMR" id="P0DKU5"/>
<dbReference type="GO" id="GO:0042627">
    <property type="term" value="C:chylomicron"/>
    <property type="evidence" value="ECO:0007669"/>
    <property type="project" value="UniProtKB-KW"/>
</dbReference>
<dbReference type="GO" id="GO:0034364">
    <property type="term" value="C:high-density lipoprotein particle"/>
    <property type="evidence" value="ECO:0007669"/>
    <property type="project" value="UniProtKB-KW"/>
</dbReference>
<dbReference type="GO" id="GO:0034362">
    <property type="term" value="C:low-density lipoprotein particle"/>
    <property type="evidence" value="ECO:0007669"/>
    <property type="project" value="UniProtKB-KW"/>
</dbReference>
<dbReference type="GO" id="GO:0034361">
    <property type="term" value="C:very-low-density lipoprotein particle"/>
    <property type="evidence" value="ECO:0007669"/>
    <property type="project" value="UniProtKB-KW"/>
</dbReference>
<dbReference type="GO" id="GO:0016004">
    <property type="term" value="F:phospholipase activator activity"/>
    <property type="evidence" value="ECO:0007669"/>
    <property type="project" value="TreeGrafter"/>
</dbReference>
<dbReference type="GO" id="GO:0043274">
    <property type="term" value="F:phospholipase binding"/>
    <property type="evidence" value="ECO:0007669"/>
    <property type="project" value="TreeGrafter"/>
</dbReference>
<dbReference type="GO" id="GO:0016042">
    <property type="term" value="P:lipid catabolic process"/>
    <property type="evidence" value="ECO:0007669"/>
    <property type="project" value="UniProtKB-KW"/>
</dbReference>
<dbReference type="GO" id="GO:0006869">
    <property type="term" value="P:lipid transport"/>
    <property type="evidence" value="ECO:0007669"/>
    <property type="project" value="UniProtKB-KW"/>
</dbReference>
<dbReference type="GO" id="GO:0060697">
    <property type="term" value="P:positive regulation of phospholipid catabolic process"/>
    <property type="evidence" value="ECO:0007669"/>
    <property type="project" value="TreeGrafter"/>
</dbReference>
<dbReference type="FunFam" id="1.10.1440.10:FF:000001">
    <property type="entry name" value="Apolipoprotein C-II"/>
    <property type="match status" value="1"/>
</dbReference>
<dbReference type="Gene3D" id="1.10.1440.10">
    <property type="entry name" value="Apolipoprotein C-II"/>
    <property type="match status" value="1"/>
</dbReference>
<dbReference type="InterPro" id="IPR008019">
    <property type="entry name" value="Apo-CII"/>
</dbReference>
<dbReference type="InterPro" id="IPR023121">
    <property type="entry name" value="ApoC-II_dom_sf"/>
</dbReference>
<dbReference type="PANTHER" id="PTHR16566">
    <property type="entry name" value="APOLIPOPROTEIN C-II"/>
    <property type="match status" value="1"/>
</dbReference>
<dbReference type="PANTHER" id="PTHR16566:SF0">
    <property type="entry name" value="APOLIPOPROTEIN C-II"/>
    <property type="match status" value="1"/>
</dbReference>
<dbReference type="Pfam" id="PF05355">
    <property type="entry name" value="Apo-CII"/>
    <property type="match status" value="1"/>
</dbReference>
<keyword id="KW-0162">Chylomicron</keyword>
<keyword id="KW-0325">Glycoprotein</keyword>
<keyword id="KW-0345">HDL</keyword>
<keyword id="KW-0427">LDL</keyword>
<keyword id="KW-0442">Lipid degradation</keyword>
<keyword id="KW-0443">Lipid metabolism</keyword>
<keyword id="KW-0445">Lipid transport</keyword>
<keyword id="KW-0964">Secreted</keyword>
<keyword id="KW-0730">Sialic acid</keyword>
<keyword id="KW-0732">Signal</keyword>
<keyword id="KW-0813">Transport</keyword>
<keyword id="KW-0850">VLDL</keyword>
<sequence>MGTRFLLALCLVLLVLGFEVQGAQLSQQDEPPSPALLTQVQESLSSYWESAKAAAQKLYQKTYLPAVDEKLRDLYSKSTAAMSTYTGIFTDQVLSVLKGEE</sequence>
<protein>
    <recommendedName>
        <fullName>Apolipoprotein C-II</fullName>
        <shortName>Apo-CII</shortName>
        <shortName>ApoC-II</shortName>
    </recommendedName>
    <alternativeName>
        <fullName>Apolipoprotein C2</fullName>
    </alternativeName>
    <component>
        <recommendedName>
            <fullName>Proapolipoprotein C-II</fullName>
            <shortName>ProapoC-II</shortName>
        </recommendedName>
    </component>
</protein>
<accession>P0DKU5</accession>
<evidence type="ECO:0000250" key="1">
    <source>
        <dbReference type="UniProtKB" id="P02655"/>
    </source>
</evidence>
<evidence type="ECO:0000255" key="2"/>
<evidence type="ECO:0000305" key="3"/>
<gene>
    <name type="primary">APOC2</name>
</gene>
<comment type="function">
    <text evidence="1">Component of chylomicrons, very low-density lipoproteins (VLDL), low-density lipoproteins (LDL), and high-density lipoproteins (HDL) in plasma. Plays an important role in lipoprotein metabolism as an activator of lipoprotein lipase. Both proapolipoprotein C-II and apolipoprotein C-II can activate lipoprotein lipase.</text>
</comment>
<comment type="subcellular location">
    <subcellularLocation>
        <location evidence="1">Secreted</location>
    </subcellularLocation>
</comment>
<comment type="PTM">
    <text evidence="1">Proapolipoprotein C-II is synthesized as a sialic acid containing glycoprotein which is subsequently desialylated prior to its proteolytic processing.</text>
</comment>
<comment type="PTM">
    <text evidence="1">Proapolipoprotein C-II, the major form found in plasma undergoes proteolytic cleavage of its N-terminal hexapeptide to generate apolipoprotein C-II, which occurs as the minor form in plasma.</text>
</comment>
<comment type="similarity">
    <text evidence="3">Belongs to the apolipoprotein C2 family.</text>
</comment>
<reference key="1">
    <citation type="submission" date="2006-07" db="EMBL/GenBank/DDBJ databases">
        <authorList>
            <person name="Cheng J.-F."/>
            <person name="Hamilton M."/>
            <person name="Peng Y."/>
            <person name="Hosseini R."/>
            <person name="Peng Z."/>
            <person name="Malinov I."/>
            <person name="Rubin E.M."/>
        </authorList>
    </citation>
    <scope>NUCLEOTIDE SEQUENCE [LARGE SCALE GENOMIC DNA]</scope>
</reference>
<reference key="2">
    <citation type="unpublished observations" date="2012-11">
        <authorList>
            <person name="Puppione D.L."/>
        </authorList>
    </citation>
    <scope>IDENTIFICATION</scope>
</reference>
<organism>
    <name type="scientific">Colobus guereza</name>
    <name type="common">Mantled guereza</name>
    <name type="synonym">Eastern black-and-white colobus monkey</name>
    <dbReference type="NCBI Taxonomy" id="33548"/>
    <lineage>
        <taxon>Eukaryota</taxon>
        <taxon>Metazoa</taxon>
        <taxon>Chordata</taxon>
        <taxon>Craniata</taxon>
        <taxon>Vertebrata</taxon>
        <taxon>Euteleostomi</taxon>
        <taxon>Mammalia</taxon>
        <taxon>Eutheria</taxon>
        <taxon>Euarchontoglires</taxon>
        <taxon>Primates</taxon>
        <taxon>Haplorrhini</taxon>
        <taxon>Catarrhini</taxon>
        <taxon>Cercopithecidae</taxon>
        <taxon>Colobinae</taxon>
        <taxon>Colobus</taxon>
    </lineage>
</organism>
<proteinExistence type="inferred from homology"/>